<organism>
    <name type="scientific">Mus musculus</name>
    <name type="common">Mouse</name>
    <dbReference type="NCBI Taxonomy" id="10090"/>
    <lineage>
        <taxon>Eukaryota</taxon>
        <taxon>Metazoa</taxon>
        <taxon>Chordata</taxon>
        <taxon>Craniata</taxon>
        <taxon>Vertebrata</taxon>
        <taxon>Euteleostomi</taxon>
        <taxon>Mammalia</taxon>
        <taxon>Eutheria</taxon>
        <taxon>Euarchontoglires</taxon>
        <taxon>Glires</taxon>
        <taxon>Rodentia</taxon>
        <taxon>Myomorpha</taxon>
        <taxon>Muroidea</taxon>
        <taxon>Muridae</taxon>
        <taxon>Murinae</taxon>
        <taxon>Mus</taxon>
        <taxon>Mus</taxon>
    </lineage>
</organism>
<reference key="1">
    <citation type="submission" date="1995-12" db="EMBL/GenBank/DDBJ databases">
        <title>Characterization and expression of a lens gap junction connexin.</title>
        <authorList>
            <person name="Kumar N.M."/>
            <person name="Nishi M."/>
            <person name="Klier F.G."/>
            <person name="Gilula N.B."/>
        </authorList>
    </citation>
    <scope>NUCLEOTIDE SEQUENCE [GENOMIC DNA]</scope>
    <source>
        <strain>C57BL/6 X CBA</strain>
    </source>
</reference>
<reference key="2">
    <citation type="submission" date="2005-09" db="EMBL/GenBank/DDBJ databases">
        <authorList>
            <person name="Mural R.J."/>
            <person name="Adams M.D."/>
            <person name="Myers E.W."/>
            <person name="Smith H.O."/>
            <person name="Venter J.C."/>
        </authorList>
    </citation>
    <scope>NUCLEOTIDE SEQUENCE [LARGE SCALE GENOMIC DNA]</scope>
</reference>
<reference key="3">
    <citation type="journal article" date="2004" name="Genome Res.">
        <title>The status, quality, and expansion of the NIH full-length cDNA project: the Mammalian Gene Collection (MGC).</title>
        <authorList>
            <consortium name="The MGC Project Team"/>
        </authorList>
    </citation>
    <scope>NUCLEOTIDE SEQUENCE [LARGE SCALE MRNA]</scope>
    <source>
        <tissue>Brain</tissue>
    </source>
</reference>
<proteinExistence type="evidence at transcript level"/>
<comment type="function">
    <text evidence="1">Structural component of lens fiber gap junctions. Gap junctions are dodecameric channels that connect the cytoplasm of adjoining cells. They are formed by the docking of two hexameric hemichannels, one from each cell membrane. Small molecules and ions diffuse from one cell to a neighboring cell via the central pore.</text>
</comment>
<comment type="subunit">
    <text evidence="1">A hemichannel or connexon is composed of a hexamer of connexins. A functional gap junction is formed by the apposition of two hemichannels. Forms heteromeric channels with GJA8.</text>
</comment>
<comment type="subcellular location">
    <subcellularLocation>
        <location evidence="1">Cell membrane</location>
        <topology evidence="1">Multi-pass membrane protein</topology>
    </subcellularLocation>
    <subcellularLocation>
        <location evidence="1">Cell junction</location>
        <location evidence="1">Gap junction</location>
    </subcellularLocation>
</comment>
<comment type="similarity">
    <text evidence="3">Belongs to the connexin family. Alpha-type (group II) subfamily.</text>
</comment>
<sequence>MGDWSFLGRLLENAQEHSTVIGKVWLTVLFIFRILVLGAAAEEVWGDEQSDFTCNTQQPGCENVCYDRAFPISHIRFWALQIIFVSTPTLIYLGHVLHIVRMEEKKKEREEELLRRDNPQHGRGREPMRTGSPRDPPLRDDRGKVRIAGALLRTYVFNIIFKTLFEVGFIAGQYFLYGFQLQPLYRCDRWPCPNTVDCFISRPTEKTIFVIFMLAVACASLVLNMLEIYHLGWKKLKQGVTNHFNPDASEARHKPLDPLPTATSSGPPSVSIGFPPYYTHPACPTVQAKAIGFPGAPLSPADFTVVTLNDAQGRNHPVKHCNGHHLTTEQNWTRQVAEQQTPASKPSSAASSPDGRKGLIDSSGSSLQESALVVTPEEGEQALATTVEMHSPPLVLLDPGRSSKSSNGRARPGDLAI</sequence>
<protein>
    <recommendedName>
        <fullName>Gap junction alpha-3 protein</fullName>
    </recommendedName>
    <alternativeName>
        <fullName>Connexin-46</fullName>
        <shortName>Cx46</shortName>
    </alternativeName>
</protein>
<gene>
    <name type="primary">Gja3</name>
</gene>
<evidence type="ECO:0000250" key="1">
    <source>
        <dbReference type="UniProtKB" id="Q9TU17"/>
    </source>
</evidence>
<evidence type="ECO:0000256" key="2">
    <source>
        <dbReference type="SAM" id="MobiDB-lite"/>
    </source>
</evidence>
<evidence type="ECO:0000305" key="3"/>
<dbReference type="EMBL" id="U44955">
    <property type="protein sequence ID" value="AAB03211.1"/>
    <property type="molecule type" value="Genomic_DNA"/>
</dbReference>
<dbReference type="EMBL" id="CH466535">
    <property type="protein sequence ID" value="EDL36182.1"/>
    <property type="molecule type" value="Genomic_DNA"/>
</dbReference>
<dbReference type="EMBL" id="CH466535">
    <property type="protein sequence ID" value="EDL36184.1"/>
    <property type="molecule type" value="Genomic_DNA"/>
</dbReference>
<dbReference type="EMBL" id="BC138492">
    <property type="protein sequence ID" value="AAI38493.1"/>
    <property type="molecule type" value="mRNA"/>
</dbReference>
<dbReference type="EMBL" id="BC138493">
    <property type="protein sequence ID" value="AAI38494.1"/>
    <property type="molecule type" value="mRNA"/>
</dbReference>
<dbReference type="CCDS" id="CCDS27152.1"/>
<dbReference type="RefSeq" id="NP_001258552.1">
    <property type="nucleotide sequence ID" value="NM_001271623.1"/>
</dbReference>
<dbReference type="RefSeq" id="NP_058671.2">
    <property type="nucleotide sequence ID" value="NM_016975.3"/>
</dbReference>
<dbReference type="RefSeq" id="XP_011243261.1">
    <property type="nucleotide sequence ID" value="XM_011244959.1"/>
</dbReference>
<dbReference type="SMR" id="Q64448"/>
<dbReference type="BioGRID" id="199925">
    <property type="interactions" value="1"/>
</dbReference>
<dbReference type="FunCoup" id="Q64448">
    <property type="interactions" value="52"/>
</dbReference>
<dbReference type="STRING" id="10090.ENSMUSP00000059587"/>
<dbReference type="PhosphoSitePlus" id="Q64448"/>
<dbReference type="PaxDb" id="10090-ENSMUSP00000059587"/>
<dbReference type="ProteomicsDB" id="284071"/>
<dbReference type="Antibodypedia" id="22305">
    <property type="antibodies" value="207 antibodies from 31 providers"/>
</dbReference>
<dbReference type="DNASU" id="14611"/>
<dbReference type="Ensembl" id="ENSMUST00000061614.8">
    <property type="protein sequence ID" value="ENSMUSP00000059587.7"/>
    <property type="gene ID" value="ENSMUSG00000048582.8"/>
</dbReference>
<dbReference type="GeneID" id="14611"/>
<dbReference type="KEGG" id="mmu:14611"/>
<dbReference type="UCSC" id="uc007ucv.2">
    <property type="organism name" value="mouse"/>
</dbReference>
<dbReference type="AGR" id="MGI:95714"/>
<dbReference type="CTD" id="2700"/>
<dbReference type="MGI" id="MGI:95714">
    <property type="gene designation" value="Gja3"/>
</dbReference>
<dbReference type="VEuPathDB" id="HostDB:ENSMUSG00000048582"/>
<dbReference type="eggNOG" id="ENOG502QUKJ">
    <property type="taxonomic scope" value="Eukaryota"/>
</dbReference>
<dbReference type="GeneTree" id="ENSGT01050000244864"/>
<dbReference type="HOGENOM" id="CLU_037388_0_0_1"/>
<dbReference type="InParanoid" id="Q64448"/>
<dbReference type="OMA" id="YTHPACP"/>
<dbReference type="OrthoDB" id="9930281at2759"/>
<dbReference type="PhylomeDB" id="Q64448"/>
<dbReference type="TreeFam" id="TF329606"/>
<dbReference type="Reactome" id="R-MMU-190861">
    <property type="pathway name" value="Gap junction assembly"/>
</dbReference>
<dbReference type="BioGRID-ORCS" id="14611">
    <property type="hits" value="0 hits in 79 CRISPR screens"/>
</dbReference>
<dbReference type="PRO" id="PR:Q64448"/>
<dbReference type="Proteomes" id="UP000000589">
    <property type="component" value="Chromosome 14"/>
</dbReference>
<dbReference type="RNAct" id="Q64448">
    <property type="molecule type" value="protein"/>
</dbReference>
<dbReference type="Bgee" id="ENSMUSG00000048582">
    <property type="expression patterns" value="Expressed in epithelium of lens and 68 other cell types or tissues"/>
</dbReference>
<dbReference type="ExpressionAtlas" id="Q64448">
    <property type="expression patterns" value="baseline and differential"/>
</dbReference>
<dbReference type="GO" id="GO:0005922">
    <property type="term" value="C:connexin complex"/>
    <property type="evidence" value="ECO:0000250"/>
    <property type="project" value="UniProtKB"/>
</dbReference>
<dbReference type="GO" id="GO:0005921">
    <property type="term" value="C:gap junction"/>
    <property type="evidence" value="ECO:0000314"/>
    <property type="project" value="MGI"/>
</dbReference>
<dbReference type="GO" id="GO:0005886">
    <property type="term" value="C:plasma membrane"/>
    <property type="evidence" value="ECO:0000314"/>
    <property type="project" value="MGI"/>
</dbReference>
<dbReference type="GO" id="GO:0055077">
    <property type="term" value="F:gap junction hemi-channel activity"/>
    <property type="evidence" value="ECO:0000250"/>
    <property type="project" value="UniProtKB"/>
</dbReference>
<dbReference type="GO" id="GO:0007154">
    <property type="term" value="P:cell communication"/>
    <property type="evidence" value="ECO:0007669"/>
    <property type="project" value="InterPro"/>
</dbReference>
<dbReference type="GO" id="GO:1990349">
    <property type="term" value="P:gap junction-mediated intercellular transport"/>
    <property type="evidence" value="ECO:0000250"/>
    <property type="project" value="UniProtKB"/>
</dbReference>
<dbReference type="GO" id="GO:0007601">
    <property type="term" value="P:visual perception"/>
    <property type="evidence" value="ECO:0007669"/>
    <property type="project" value="InterPro"/>
</dbReference>
<dbReference type="FunFam" id="1.20.1440.80:FF:000002">
    <property type="entry name" value="Gap junction protein"/>
    <property type="match status" value="1"/>
</dbReference>
<dbReference type="Gene3D" id="1.20.1440.80">
    <property type="entry name" value="Gap junction channel protein cysteine-rich domain"/>
    <property type="match status" value="1"/>
</dbReference>
<dbReference type="InterPro" id="IPR000500">
    <property type="entry name" value="Connexin"/>
</dbReference>
<dbReference type="InterPro" id="IPR002262">
    <property type="entry name" value="Connexin46"/>
</dbReference>
<dbReference type="InterPro" id="IPR034634">
    <property type="entry name" value="Connexin_C"/>
</dbReference>
<dbReference type="InterPro" id="IPR019570">
    <property type="entry name" value="Connexin_CCC"/>
</dbReference>
<dbReference type="InterPro" id="IPR017990">
    <property type="entry name" value="Connexin_CS"/>
</dbReference>
<dbReference type="InterPro" id="IPR013092">
    <property type="entry name" value="Connexin_N"/>
</dbReference>
<dbReference type="InterPro" id="IPR038359">
    <property type="entry name" value="Connexin_N_sf"/>
</dbReference>
<dbReference type="PANTHER" id="PTHR11984">
    <property type="entry name" value="CONNEXIN"/>
    <property type="match status" value="1"/>
</dbReference>
<dbReference type="PANTHER" id="PTHR11984:SF12">
    <property type="entry name" value="GAP JUNCTION ALPHA-3 PROTEIN"/>
    <property type="match status" value="1"/>
</dbReference>
<dbReference type="Pfam" id="PF00029">
    <property type="entry name" value="Connexin"/>
    <property type="match status" value="1"/>
</dbReference>
<dbReference type="PRINTS" id="PR00206">
    <property type="entry name" value="CONNEXIN"/>
</dbReference>
<dbReference type="PRINTS" id="PR01133">
    <property type="entry name" value="CONNEXINA3"/>
</dbReference>
<dbReference type="SMART" id="SM00037">
    <property type="entry name" value="CNX"/>
    <property type="match status" value="1"/>
</dbReference>
<dbReference type="SMART" id="SM01089">
    <property type="entry name" value="Connexin_CCC"/>
    <property type="match status" value="1"/>
</dbReference>
<dbReference type="SUPFAM" id="SSF118220">
    <property type="entry name" value="Connexin43"/>
    <property type="match status" value="1"/>
</dbReference>
<dbReference type="PROSITE" id="PS00407">
    <property type="entry name" value="CONNEXINS_1"/>
    <property type="match status" value="1"/>
</dbReference>
<dbReference type="PROSITE" id="PS00408">
    <property type="entry name" value="CONNEXINS_2"/>
    <property type="match status" value="1"/>
</dbReference>
<name>CXA3_MOUSE</name>
<feature type="initiator methionine" description="Removed" evidence="1">
    <location>
        <position position="1"/>
    </location>
</feature>
<feature type="chain" id="PRO_0000057811" description="Gap junction alpha-3 protein">
    <location>
        <begin position="2"/>
        <end position="417"/>
    </location>
</feature>
<feature type="intramembrane region" evidence="1">
    <location>
        <begin position="2"/>
        <end position="15"/>
    </location>
</feature>
<feature type="topological domain" description="Cytoplasmic" evidence="3">
    <location>
        <begin position="16"/>
        <end position="19"/>
    </location>
</feature>
<feature type="transmembrane region" description="Helical" evidence="1">
    <location>
        <begin position="20"/>
        <end position="40"/>
    </location>
</feature>
<feature type="topological domain" description="Extracellular" evidence="3">
    <location>
        <begin position="41"/>
        <end position="71"/>
    </location>
</feature>
<feature type="transmembrane region" description="Helical" evidence="1">
    <location>
        <begin position="72"/>
        <end position="92"/>
    </location>
</feature>
<feature type="topological domain" description="Cytoplasmic" evidence="3">
    <location>
        <begin position="93"/>
        <end position="158"/>
    </location>
</feature>
<feature type="transmembrane region" description="Helical" evidence="1">
    <location>
        <begin position="159"/>
        <end position="179"/>
    </location>
</feature>
<feature type="topological domain" description="Extracellular" evidence="3">
    <location>
        <begin position="180"/>
        <end position="207"/>
    </location>
</feature>
<feature type="transmembrane region" description="Helical" evidence="1">
    <location>
        <begin position="208"/>
        <end position="228"/>
    </location>
</feature>
<feature type="topological domain" description="Cytoplasmic" evidence="3">
    <location>
        <begin position="229"/>
        <end position="417"/>
    </location>
</feature>
<feature type="region of interest" description="Disordered" evidence="2">
    <location>
        <begin position="110"/>
        <end position="141"/>
    </location>
</feature>
<feature type="region of interest" description="Disordered" evidence="2">
    <location>
        <begin position="247"/>
        <end position="267"/>
    </location>
</feature>
<feature type="region of interest" description="Disordered" evidence="2">
    <location>
        <begin position="334"/>
        <end position="417"/>
    </location>
</feature>
<feature type="compositionally biased region" description="Basic and acidic residues" evidence="2">
    <location>
        <begin position="110"/>
        <end position="128"/>
    </location>
</feature>
<feature type="compositionally biased region" description="Low complexity" evidence="2">
    <location>
        <begin position="342"/>
        <end position="353"/>
    </location>
</feature>
<feature type="disulfide bond" evidence="1">
    <location>
        <begin position="54"/>
        <end position="198"/>
    </location>
</feature>
<feature type="disulfide bond" evidence="1">
    <location>
        <begin position="61"/>
        <end position="192"/>
    </location>
</feature>
<feature type="disulfide bond" evidence="1">
    <location>
        <begin position="65"/>
        <end position="187"/>
    </location>
</feature>
<feature type="sequence conflict" description="In Ref. 1; AAB03211." evidence="3" ref="1">
    <original>T</original>
    <variation>A</variation>
    <location>
        <position position="261"/>
    </location>
</feature>
<feature type="sequence conflict" description="In Ref. 1; AAB03211." evidence="3" ref="1">
    <original>A</original>
    <variation>G</variation>
    <location>
        <position position="288"/>
    </location>
</feature>
<feature type="sequence conflict" description="In Ref. 1; AAB03211." evidence="3" ref="1">
    <original>H</original>
    <variation>Y</variation>
    <location>
        <position position="390"/>
    </location>
</feature>
<accession>Q64448</accession>
<accession>B2RRM1</accession>
<keyword id="KW-0965">Cell junction</keyword>
<keyword id="KW-1003">Cell membrane</keyword>
<keyword id="KW-1015">Disulfide bond</keyword>
<keyword id="KW-0303">Gap junction</keyword>
<keyword id="KW-0472">Membrane</keyword>
<keyword id="KW-1185">Reference proteome</keyword>
<keyword id="KW-0812">Transmembrane</keyword>
<keyword id="KW-1133">Transmembrane helix</keyword>